<feature type="chain" id="PRO_1000166867" description="Large ribosomal subunit protein uL13">
    <location>
        <begin position="1"/>
        <end position="142"/>
    </location>
</feature>
<gene>
    <name evidence="1" type="primary">rplM</name>
    <name type="ordered locus">E2348C_3502</name>
</gene>
<name>RL13_ECO27</name>
<proteinExistence type="inferred from homology"/>
<protein>
    <recommendedName>
        <fullName evidence="1">Large ribosomal subunit protein uL13</fullName>
    </recommendedName>
    <alternativeName>
        <fullName evidence="2">50S ribosomal protein L13</fullName>
    </alternativeName>
</protein>
<reference key="1">
    <citation type="journal article" date="2009" name="J. Bacteriol.">
        <title>Complete genome sequence and comparative genome analysis of enteropathogenic Escherichia coli O127:H6 strain E2348/69.</title>
        <authorList>
            <person name="Iguchi A."/>
            <person name="Thomson N.R."/>
            <person name="Ogura Y."/>
            <person name="Saunders D."/>
            <person name="Ooka T."/>
            <person name="Henderson I.R."/>
            <person name="Harris D."/>
            <person name="Asadulghani M."/>
            <person name="Kurokawa K."/>
            <person name="Dean P."/>
            <person name="Kenny B."/>
            <person name="Quail M.A."/>
            <person name="Thurston S."/>
            <person name="Dougan G."/>
            <person name="Hayashi T."/>
            <person name="Parkhill J."/>
            <person name="Frankel G."/>
        </authorList>
    </citation>
    <scope>NUCLEOTIDE SEQUENCE [LARGE SCALE GENOMIC DNA]</scope>
    <source>
        <strain>E2348/69 / EPEC</strain>
    </source>
</reference>
<sequence length="142" mass="16019">MKTFTAKPETVKRDWYVVDATGKTLGRLATELARRLRGKHKAEYTPHVDTGDYIIVLNADKVAVTGNKRTDKVYYHHTGHIGGIKQATFEEMIARRPERVIEIAVKGMLPKGPLGRAMFRKLKVYAGNEHNHAAQQPQVLDI</sequence>
<organism>
    <name type="scientific">Escherichia coli O127:H6 (strain E2348/69 / EPEC)</name>
    <dbReference type="NCBI Taxonomy" id="574521"/>
    <lineage>
        <taxon>Bacteria</taxon>
        <taxon>Pseudomonadati</taxon>
        <taxon>Pseudomonadota</taxon>
        <taxon>Gammaproteobacteria</taxon>
        <taxon>Enterobacterales</taxon>
        <taxon>Enterobacteriaceae</taxon>
        <taxon>Escherichia</taxon>
    </lineage>
</organism>
<dbReference type="EMBL" id="FM180568">
    <property type="protein sequence ID" value="CAS11050.1"/>
    <property type="molecule type" value="Genomic_DNA"/>
</dbReference>
<dbReference type="RefSeq" id="WP_000847559.1">
    <property type="nucleotide sequence ID" value="NC_011601.1"/>
</dbReference>
<dbReference type="SMR" id="B7UJW3"/>
<dbReference type="GeneID" id="89518067"/>
<dbReference type="KEGG" id="ecg:E2348C_3502"/>
<dbReference type="HOGENOM" id="CLU_082184_2_2_6"/>
<dbReference type="Proteomes" id="UP000008205">
    <property type="component" value="Chromosome"/>
</dbReference>
<dbReference type="GO" id="GO:0022625">
    <property type="term" value="C:cytosolic large ribosomal subunit"/>
    <property type="evidence" value="ECO:0007669"/>
    <property type="project" value="TreeGrafter"/>
</dbReference>
<dbReference type="GO" id="GO:0003729">
    <property type="term" value="F:mRNA binding"/>
    <property type="evidence" value="ECO:0007669"/>
    <property type="project" value="TreeGrafter"/>
</dbReference>
<dbReference type="GO" id="GO:0003735">
    <property type="term" value="F:structural constituent of ribosome"/>
    <property type="evidence" value="ECO:0007669"/>
    <property type="project" value="InterPro"/>
</dbReference>
<dbReference type="GO" id="GO:0017148">
    <property type="term" value="P:negative regulation of translation"/>
    <property type="evidence" value="ECO:0007669"/>
    <property type="project" value="TreeGrafter"/>
</dbReference>
<dbReference type="GO" id="GO:0006412">
    <property type="term" value="P:translation"/>
    <property type="evidence" value="ECO:0007669"/>
    <property type="project" value="UniProtKB-UniRule"/>
</dbReference>
<dbReference type="CDD" id="cd00392">
    <property type="entry name" value="Ribosomal_L13"/>
    <property type="match status" value="1"/>
</dbReference>
<dbReference type="FunFam" id="3.90.1180.10:FF:000001">
    <property type="entry name" value="50S ribosomal protein L13"/>
    <property type="match status" value="1"/>
</dbReference>
<dbReference type="Gene3D" id="3.90.1180.10">
    <property type="entry name" value="Ribosomal protein L13"/>
    <property type="match status" value="1"/>
</dbReference>
<dbReference type="HAMAP" id="MF_01366">
    <property type="entry name" value="Ribosomal_uL13"/>
    <property type="match status" value="1"/>
</dbReference>
<dbReference type="InterPro" id="IPR005822">
    <property type="entry name" value="Ribosomal_uL13"/>
</dbReference>
<dbReference type="InterPro" id="IPR005823">
    <property type="entry name" value="Ribosomal_uL13_bac-type"/>
</dbReference>
<dbReference type="InterPro" id="IPR023563">
    <property type="entry name" value="Ribosomal_uL13_CS"/>
</dbReference>
<dbReference type="InterPro" id="IPR036899">
    <property type="entry name" value="Ribosomal_uL13_sf"/>
</dbReference>
<dbReference type="NCBIfam" id="TIGR01066">
    <property type="entry name" value="rplM_bact"/>
    <property type="match status" value="1"/>
</dbReference>
<dbReference type="PANTHER" id="PTHR11545:SF2">
    <property type="entry name" value="LARGE RIBOSOMAL SUBUNIT PROTEIN UL13M"/>
    <property type="match status" value="1"/>
</dbReference>
<dbReference type="PANTHER" id="PTHR11545">
    <property type="entry name" value="RIBOSOMAL PROTEIN L13"/>
    <property type="match status" value="1"/>
</dbReference>
<dbReference type="Pfam" id="PF00572">
    <property type="entry name" value="Ribosomal_L13"/>
    <property type="match status" value="1"/>
</dbReference>
<dbReference type="PIRSF" id="PIRSF002181">
    <property type="entry name" value="Ribosomal_L13"/>
    <property type="match status" value="1"/>
</dbReference>
<dbReference type="SUPFAM" id="SSF52161">
    <property type="entry name" value="Ribosomal protein L13"/>
    <property type="match status" value="1"/>
</dbReference>
<dbReference type="PROSITE" id="PS00783">
    <property type="entry name" value="RIBOSOMAL_L13"/>
    <property type="match status" value="1"/>
</dbReference>
<comment type="function">
    <text evidence="1">This protein is one of the early assembly proteins of the 50S ribosomal subunit, although it is not seen to bind rRNA by itself. It is important during the early stages of 50S assembly.</text>
</comment>
<comment type="subunit">
    <text evidence="1">Part of the 50S ribosomal subunit.</text>
</comment>
<comment type="similarity">
    <text evidence="1">Belongs to the universal ribosomal protein uL13 family.</text>
</comment>
<keyword id="KW-1185">Reference proteome</keyword>
<keyword id="KW-0687">Ribonucleoprotein</keyword>
<keyword id="KW-0689">Ribosomal protein</keyword>
<evidence type="ECO:0000255" key="1">
    <source>
        <dbReference type="HAMAP-Rule" id="MF_01366"/>
    </source>
</evidence>
<evidence type="ECO:0000305" key="2"/>
<accession>B7UJW3</accession>